<accession>O43295</accession>
<accession>Q8IX13</accession>
<accession>Q8IZV8</accession>
<evidence type="ECO:0000250" key="1">
    <source>
        <dbReference type="UniProtKB" id="Q812A2"/>
    </source>
</evidence>
<evidence type="ECO:0000255" key="2"/>
<evidence type="ECO:0000255" key="3">
    <source>
        <dbReference type="PROSITE-ProRule" id="PRU00172"/>
    </source>
</evidence>
<evidence type="ECO:0000255" key="4">
    <source>
        <dbReference type="PROSITE-ProRule" id="PRU00192"/>
    </source>
</evidence>
<evidence type="ECO:0000255" key="5">
    <source>
        <dbReference type="PROSITE-ProRule" id="PRU01077"/>
    </source>
</evidence>
<evidence type="ECO:0000256" key="6">
    <source>
        <dbReference type="SAM" id="MobiDB-lite"/>
    </source>
</evidence>
<evidence type="ECO:0000269" key="7">
    <source>
    </source>
</evidence>
<evidence type="ECO:0000269" key="8">
    <source>
    </source>
</evidence>
<evidence type="ECO:0000269" key="9">
    <source>
    </source>
</evidence>
<evidence type="ECO:0000269" key="10">
    <source>
    </source>
</evidence>
<evidence type="ECO:0000269" key="11">
    <source>
    </source>
</evidence>
<evidence type="ECO:0000303" key="12">
    <source>
    </source>
</evidence>
<evidence type="ECO:0000303" key="13">
    <source>
    </source>
</evidence>
<evidence type="ECO:0000305" key="14"/>
<evidence type="ECO:0007744" key="15">
    <source>
    </source>
</evidence>
<dbReference type="EMBL" id="AF464189">
    <property type="protein sequence ID" value="AAN57784.1"/>
    <property type="molecule type" value="mRNA"/>
</dbReference>
<dbReference type="EMBL" id="AF427144">
    <property type="protein sequence ID" value="AAN07095.1"/>
    <property type="molecule type" value="mRNA"/>
</dbReference>
<dbReference type="EMBL" id="AB007871">
    <property type="protein sequence ID" value="BAA24841.2"/>
    <property type="molecule type" value="mRNA"/>
</dbReference>
<dbReference type="CCDS" id="CCDS2572.1">
    <molecule id="O43295-1"/>
</dbReference>
<dbReference type="CCDS" id="CCDS33689.1">
    <molecule id="O43295-2"/>
</dbReference>
<dbReference type="RefSeq" id="NP_001028289.1">
    <molecule id="O43295-2"/>
    <property type="nucleotide sequence ID" value="NM_001033117.3"/>
</dbReference>
<dbReference type="RefSeq" id="NP_055665.1">
    <molecule id="O43295-1"/>
    <property type="nucleotide sequence ID" value="NM_014850.4"/>
</dbReference>
<dbReference type="SMR" id="O43295"/>
<dbReference type="BioGRID" id="115230">
    <property type="interactions" value="50"/>
</dbReference>
<dbReference type="FunCoup" id="O43295">
    <property type="interactions" value="1291"/>
</dbReference>
<dbReference type="IntAct" id="O43295">
    <property type="interactions" value="47"/>
</dbReference>
<dbReference type="MINT" id="O43295"/>
<dbReference type="STRING" id="9606.ENSP00000373347"/>
<dbReference type="GlyGen" id="O43295">
    <property type="glycosylation" value="2 sites, 1 O-linked glycan (1 site)"/>
</dbReference>
<dbReference type="iPTMnet" id="O43295"/>
<dbReference type="PhosphoSitePlus" id="O43295"/>
<dbReference type="SwissPalm" id="O43295"/>
<dbReference type="BioMuta" id="SRGAP3"/>
<dbReference type="jPOST" id="O43295"/>
<dbReference type="MassIVE" id="O43295"/>
<dbReference type="PaxDb" id="9606-ENSP00000373347"/>
<dbReference type="PeptideAtlas" id="O43295"/>
<dbReference type="ProteomicsDB" id="48867">
    <molecule id="O43295-1"/>
</dbReference>
<dbReference type="ProteomicsDB" id="48868">
    <molecule id="O43295-2"/>
</dbReference>
<dbReference type="ProteomicsDB" id="48869">
    <molecule id="O43295-3"/>
</dbReference>
<dbReference type="Antibodypedia" id="25344">
    <property type="antibodies" value="126 antibodies from 20 providers"/>
</dbReference>
<dbReference type="DNASU" id="9901"/>
<dbReference type="Ensembl" id="ENST00000360413.7">
    <molecule id="O43295-2"/>
    <property type="protein sequence ID" value="ENSP00000353587.3"/>
    <property type="gene ID" value="ENSG00000196220.17"/>
</dbReference>
<dbReference type="Ensembl" id="ENST00000383836.8">
    <molecule id="O43295-1"/>
    <property type="protein sequence ID" value="ENSP00000373347.3"/>
    <property type="gene ID" value="ENSG00000196220.17"/>
</dbReference>
<dbReference type="GeneID" id="9901"/>
<dbReference type="KEGG" id="hsa:9901"/>
<dbReference type="MANE-Select" id="ENST00000383836.8">
    <property type="protein sequence ID" value="ENSP00000373347.3"/>
    <property type="RefSeq nucleotide sequence ID" value="NM_014850.4"/>
    <property type="RefSeq protein sequence ID" value="NP_055665.1"/>
</dbReference>
<dbReference type="UCSC" id="uc003brf.4">
    <molecule id="O43295-1"/>
    <property type="organism name" value="human"/>
</dbReference>
<dbReference type="AGR" id="HGNC:19744"/>
<dbReference type="CTD" id="9901"/>
<dbReference type="DisGeNET" id="9901"/>
<dbReference type="GeneCards" id="SRGAP3"/>
<dbReference type="HGNC" id="HGNC:19744">
    <property type="gene designation" value="SRGAP3"/>
</dbReference>
<dbReference type="HPA" id="ENSG00000196220">
    <property type="expression patterns" value="Tissue enhanced (brain)"/>
</dbReference>
<dbReference type="MalaCards" id="SRGAP3"/>
<dbReference type="MIM" id="606525">
    <property type="type" value="gene"/>
</dbReference>
<dbReference type="neXtProt" id="NX_O43295"/>
<dbReference type="OpenTargets" id="ENSG00000196220"/>
<dbReference type="Orphanet" id="251615">
    <property type="disease" value="Pilomyxoid astrocytoma"/>
</dbReference>
<dbReference type="PharmGKB" id="PA134935463"/>
<dbReference type="VEuPathDB" id="HostDB:ENSG00000196220"/>
<dbReference type="eggNOG" id="KOG3565">
    <property type="taxonomic scope" value="Eukaryota"/>
</dbReference>
<dbReference type="GeneTree" id="ENSGT00950000182824"/>
<dbReference type="HOGENOM" id="CLU_005715_0_0_1"/>
<dbReference type="InParanoid" id="O43295"/>
<dbReference type="OMA" id="MEAFIKX"/>
<dbReference type="OrthoDB" id="5981864at2759"/>
<dbReference type="PAN-GO" id="O43295">
    <property type="GO annotations" value="2 GO annotations based on evolutionary models"/>
</dbReference>
<dbReference type="PhylomeDB" id="O43295"/>
<dbReference type="TreeFam" id="TF315892"/>
<dbReference type="PathwayCommons" id="O43295"/>
<dbReference type="Reactome" id="R-HSA-428543">
    <property type="pathway name" value="Inactivation of CDC42 and RAC1"/>
</dbReference>
<dbReference type="Reactome" id="R-HSA-9013148">
    <property type="pathway name" value="CDC42 GTPase cycle"/>
</dbReference>
<dbReference type="Reactome" id="R-HSA-9013149">
    <property type="pathway name" value="RAC1 GTPase cycle"/>
</dbReference>
<dbReference type="SignaLink" id="O43295"/>
<dbReference type="SIGNOR" id="O43295"/>
<dbReference type="BioGRID-ORCS" id="9901">
    <property type="hits" value="11 hits in 1131 CRISPR screens"/>
</dbReference>
<dbReference type="CD-CODE" id="FB4E32DD">
    <property type="entry name" value="Presynaptic clusters and postsynaptic densities"/>
</dbReference>
<dbReference type="ChiTaRS" id="SRGAP3">
    <property type="organism name" value="human"/>
</dbReference>
<dbReference type="GeneWiki" id="SRGAP3"/>
<dbReference type="GenomeRNAi" id="9901"/>
<dbReference type="Pharos" id="O43295">
    <property type="development level" value="Tbio"/>
</dbReference>
<dbReference type="PRO" id="PR:O43295"/>
<dbReference type="Proteomes" id="UP000005640">
    <property type="component" value="Chromosome 3"/>
</dbReference>
<dbReference type="RNAct" id="O43295">
    <property type="molecule type" value="protein"/>
</dbReference>
<dbReference type="Bgee" id="ENSG00000196220">
    <property type="expression patterns" value="Expressed in middle temporal gyrus and 159 other cell types or tissues"/>
</dbReference>
<dbReference type="ExpressionAtlas" id="O43295">
    <property type="expression patterns" value="baseline and differential"/>
</dbReference>
<dbReference type="GO" id="GO:0005737">
    <property type="term" value="C:cytoplasm"/>
    <property type="evidence" value="ECO:0000318"/>
    <property type="project" value="GO_Central"/>
</dbReference>
<dbReference type="GO" id="GO:0005829">
    <property type="term" value="C:cytosol"/>
    <property type="evidence" value="ECO:0000304"/>
    <property type="project" value="Reactome"/>
</dbReference>
<dbReference type="GO" id="GO:0098794">
    <property type="term" value="C:postsynapse"/>
    <property type="evidence" value="ECO:0000314"/>
    <property type="project" value="SynGO"/>
</dbReference>
<dbReference type="GO" id="GO:0005096">
    <property type="term" value="F:GTPase activator activity"/>
    <property type="evidence" value="ECO:0000304"/>
    <property type="project" value="Reactome"/>
</dbReference>
<dbReference type="GO" id="GO:0030336">
    <property type="term" value="P:negative regulation of cell migration"/>
    <property type="evidence" value="ECO:0000318"/>
    <property type="project" value="GO_Central"/>
</dbReference>
<dbReference type="GO" id="GO:0051056">
    <property type="term" value="P:regulation of small GTPase mediated signal transduction"/>
    <property type="evidence" value="ECO:0000304"/>
    <property type="project" value="Reactome"/>
</dbReference>
<dbReference type="GO" id="GO:0007165">
    <property type="term" value="P:signal transduction"/>
    <property type="evidence" value="ECO:0007669"/>
    <property type="project" value="InterPro"/>
</dbReference>
<dbReference type="CDD" id="cd07684">
    <property type="entry name" value="F-BAR_srGAP3"/>
    <property type="match status" value="1"/>
</dbReference>
<dbReference type="CDD" id="cd04383">
    <property type="entry name" value="RhoGAP_srGAP"/>
    <property type="match status" value="1"/>
</dbReference>
<dbReference type="CDD" id="cd11955">
    <property type="entry name" value="SH3_srGAP1-3"/>
    <property type="match status" value="1"/>
</dbReference>
<dbReference type="FunFam" id="1.10.555.10:FF:000013">
    <property type="entry name" value="SLIT-ROBO Rho GTPase activating protein 3"/>
    <property type="match status" value="1"/>
</dbReference>
<dbReference type="FunFam" id="1.20.1270.60:FF:000020">
    <property type="entry name" value="SLIT-ROBO Rho GTPase activating protein 3"/>
    <property type="match status" value="1"/>
</dbReference>
<dbReference type="FunFam" id="2.30.30.40:FF:000005">
    <property type="entry name" value="SLIT-ROBO Rho GTPase-activating protein 1 isoform 2"/>
    <property type="match status" value="1"/>
</dbReference>
<dbReference type="Gene3D" id="1.20.1270.60">
    <property type="entry name" value="Arfaptin homology (AH) domain/BAR domain"/>
    <property type="match status" value="1"/>
</dbReference>
<dbReference type="Gene3D" id="1.10.555.10">
    <property type="entry name" value="Rho GTPase activation protein"/>
    <property type="match status" value="1"/>
</dbReference>
<dbReference type="Gene3D" id="2.30.30.40">
    <property type="entry name" value="SH3 Domains"/>
    <property type="match status" value="1"/>
</dbReference>
<dbReference type="InterPro" id="IPR027267">
    <property type="entry name" value="AH/BAR_dom_sf"/>
</dbReference>
<dbReference type="InterPro" id="IPR031160">
    <property type="entry name" value="F_BAR"/>
</dbReference>
<dbReference type="InterPro" id="IPR001060">
    <property type="entry name" value="FCH_dom"/>
</dbReference>
<dbReference type="InterPro" id="IPR008936">
    <property type="entry name" value="Rho_GTPase_activation_prot"/>
</dbReference>
<dbReference type="InterPro" id="IPR000198">
    <property type="entry name" value="RhoGAP_dom"/>
</dbReference>
<dbReference type="InterPro" id="IPR036028">
    <property type="entry name" value="SH3-like_dom_sf"/>
</dbReference>
<dbReference type="InterPro" id="IPR001452">
    <property type="entry name" value="SH3_domain"/>
</dbReference>
<dbReference type="InterPro" id="IPR051627">
    <property type="entry name" value="SLIT-ROBO_RhoGAP"/>
</dbReference>
<dbReference type="InterPro" id="IPR035648">
    <property type="entry name" value="srGAP1/2/3_SH3"/>
</dbReference>
<dbReference type="InterPro" id="IPR049581">
    <property type="entry name" value="SrGAP3_F-BAR"/>
</dbReference>
<dbReference type="PANTHER" id="PTHR14166">
    <property type="entry name" value="SLIT-ROBO RHO GTPASE ACTIVATING PROTEIN"/>
    <property type="match status" value="1"/>
</dbReference>
<dbReference type="Pfam" id="PF00611">
    <property type="entry name" value="FCH"/>
    <property type="match status" value="1"/>
</dbReference>
<dbReference type="Pfam" id="PF00620">
    <property type="entry name" value="RhoGAP"/>
    <property type="match status" value="1"/>
</dbReference>
<dbReference type="Pfam" id="PF00018">
    <property type="entry name" value="SH3_1"/>
    <property type="match status" value="1"/>
</dbReference>
<dbReference type="SMART" id="SM00055">
    <property type="entry name" value="FCH"/>
    <property type="match status" value="1"/>
</dbReference>
<dbReference type="SMART" id="SM00324">
    <property type="entry name" value="RhoGAP"/>
    <property type="match status" value="1"/>
</dbReference>
<dbReference type="SMART" id="SM00326">
    <property type="entry name" value="SH3"/>
    <property type="match status" value="1"/>
</dbReference>
<dbReference type="SUPFAM" id="SSF103657">
    <property type="entry name" value="BAR/IMD domain-like"/>
    <property type="match status" value="1"/>
</dbReference>
<dbReference type="SUPFAM" id="SSF48350">
    <property type="entry name" value="GTPase activation domain, GAP"/>
    <property type="match status" value="1"/>
</dbReference>
<dbReference type="SUPFAM" id="SSF50044">
    <property type="entry name" value="SH3-domain"/>
    <property type="match status" value="1"/>
</dbReference>
<dbReference type="PROSITE" id="PS51741">
    <property type="entry name" value="F_BAR"/>
    <property type="match status" value="1"/>
</dbReference>
<dbReference type="PROSITE" id="PS50238">
    <property type="entry name" value="RHOGAP"/>
    <property type="match status" value="1"/>
</dbReference>
<dbReference type="PROSITE" id="PS50002">
    <property type="entry name" value="SH3"/>
    <property type="match status" value="1"/>
</dbReference>
<keyword id="KW-0025">Alternative splicing</keyword>
<keyword id="KW-0160">Chromosomal rearrangement</keyword>
<keyword id="KW-0175">Coiled coil</keyword>
<keyword id="KW-0343">GTPase activation</keyword>
<keyword id="KW-0597">Phosphoprotein</keyword>
<keyword id="KW-1267">Proteomics identification</keyword>
<keyword id="KW-1185">Reference proteome</keyword>
<keyword id="KW-0728">SH3 domain</keyword>
<name>SRGP3_HUMAN</name>
<feature type="chain" id="PRO_0000056769" description="SLIT-ROBO Rho GTPase-activating protein 3">
    <location>
        <begin position="1"/>
        <end position="1099"/>
    </location>
</feature>
<feature type="domain" description="F-BAR" evidence="5">
    <location>
        <begin position="19"/>
        <end position="314"/>
    </location>
</feature>
<feature type="domain" description="Rho-GAP" evidence="3">
    <location>
        <begin position="506"/>
        <end position="694"/>
    </location>
</feature>
<feature type="domain" description="SH3" evidence="4">
    <location>
        <begin position="744"/>
        <end position="803"/>
    </location>
</feature>
<feature type="region of interest" description="Disordered" evidence="6">
    <location>
        <begin position="205"/>
        <end position="225"/>
    </location>
</feature>
<feature type="region of interest" description="Disordered" evidence="6">
    <location>
        <begin position="471"/>
        <end position="493"/>
    </location>
</feature>
<feature type="region of interest" description="Disordered" evidence="6">
    <location>
        <begin position="809"/>
        <end position="847"/>
    </location>
</feature>
<feature type="region of interest" description="Disordered" evidence="6">
    <location>
        <begin position="861"/>
        <end position="911"/>
    </location>
</feature>
<feature type="region of interest" description="Disordered" evidence="6">
    <location>
        <begin position="926"/>
        <end position="950"/>
    </location>
</feature>
<feature type="region of interest" description="Disordered" evidence="6">
    <location>
        <begin position="995"/>
        <end position="1099"/>
    </location>
</feature>
<feature type="coiled-coil region" evidence="2">
    <location>
        <begin position="352"/>
        <end position="392"/>
    </location>
</feature>
<feature type="coiled-coil region" evidence="2">
    <location>
        <begin position="952"/>
        <end position="987"/>
    </location>
</feature>
<feature type="compositionally biased region" description="Polar residues" evidence="6">
    <location>
        <begin position="809"/>
        <end position="820"/>
    </location>
</feature>
<feature type="compositionally biased region" description="Basic and acidic residues" evidence="6">
    <location>
        <begin position="926"/>
        <end position="936"/>
    </location>
</feature>
<feature type="compositionally biased region" description="Polar residues" evidence="6">
    <location>
        <begin position="937"/>
        <end position="947"/>
    </location>
</feature>
<feature type="compositionally biased region" description="Low complexity" evidence="6">
    <location>
        <begin position="1026"/>
        <end position="1038"/>
    </location>
</feature>
<feature type="compositionally biased region" description="Low complexity" evidence="6">
    <location>
        <begin position="1060"/>
        <end position="1074"/>
    </location>
</feature>
<feature type="compositionally biased region" description="Polar residues" evidence="6">
    <location>
        <begin position="1089"/>
        <end position="1099"/>
    </location>
</feature>
<feature type="site" description="Arginine finger; crucial for GTP hydrolysis by stabilizing the transition state" evidence="3">
    <location>
        <position position="542"/>
    </location>
</feature>
<feature type="modified residue" description="Phosphoserine" evidence="1">
    <location>
        <position position="817"/>
    </location>
</feature>
<feature type="modified residue" description="Phosphoserine" evidence="1">
    <location>
        <position position="820"/>
    </location>
</feature>
<feature type="modified residue" description="Phosphoserine" evidence="1">
    <location>
        <position position="821"/>
    </location>
</feature>
<feature type="modified residue" description="Phosphoserine" evidence="15">
    <location>
        <position position="837"/>
    </location>
</feature>
<feature type="modified residue" description="Phosphoserine" evidence="1">
    <location>
        <position position="858"/>
    </location>
</feature>
<feature type="modified residue" description="Phosphoserine" evidence="1">
    <location>
        <position position="954"/>
    </location>
</feature>
<feature type="splice variant" id="VSP_010581" description="In isoform 2." evidence="12 13">
    <original>PPCLPPKPQKMRRPRPLSVYSHKLFNGSMEAFIK</original>
    <variation>GRRNARTRNQ</variation>
    <location>
        <begin position="480"/>
        <end position="513"/>
    </location>
</feature>
<feature type="splice variant" id="VSP_010582" description="In isoform 3." evidence="14">
    <original>PPCLPPKPQK</original>
    <variation>IQDKLYRL</variation>
    <location>
        <begin position="480"/>
        <end position="489"/>
    </location>
</feature>
<feature type="splice variant" id="VSP_010583" description="In isoform 3." evidence="14">
    <location>
        <begin position="490"/>
        <end position="1099"/>
    </location>
</feature>
<feature type="sequence variant" id="VAR_035550" description="In a breast cancer sample; somatic mutation." evidence="10">
    <original>L</original>
    <variation>I</variation>
    <location>
        <position position="623"/>
    </location>
</feature>
<feature type="sequence variant" id="VAR_049159" description="In dbSNP:rs2271207.">
    <original>I</original>
    <variation>V</variation>
    <location>
        <position position="628"/>
    </location>
</feature>
<gene>
    <name type="primary">SRGAP3</name>
    <name type="synonym">ARHGAP14</name>
    <name type="synonym">KIAA0411</name>
    <name type="synonym">KIAA1156</name>
    <name type="synonym">MEGAP</name>
    <name type="synonym">SRGAP2</name>
</gene>
<reference key="1">
    <citation type="journal article" date="2002" name="Nat. Cell Biol.">
        <title>The WRP component of the WAVE-1 complex attenuates Rac-mediated signalling.</title>
        <authorList>
            <person name="Soderling S.H."/>
            <person name="Binns K.L."/>
            <person name="Wayman G.A."/>
            <person name="Davee S.M."/>
            <person name="Ong S.H."/>
            <person name="Pawson T."/>
            <person name="Scott J.D."/>
        </authorList>
    </citation>
    <scope>NUCLEOTIDE SEQUENCE [MRNA] (ISOFORM 2)</scope>
    <scope>FUNCTION</scope>
    <scope>TISSUE SPECIFICITY</scope>
    <scope>INTERACTION WITH WASF1</scope>
</reference>
<reference key="2">
    <citation type="journal article" date="2002" name="Proc. Natl. Acad. Sci. U.S.A.">
        <title>The novel Rho-GTPase activating gene MEGAP/ srGAP3 has a putative role in severe mental retardation.</title>
        <authorList>
            <person name="Endris V."/>
            <person name="Wogatzky B."/>
            <person name="Leimer U."/>
            <person name="Bartsch D."/>
            <person name="Zatyka M."/>
            <person name="Latif F."/>
            <person name="Maher E.R."/>
            <person name="Tariverdian G."/>
            <person name="Kirsch S."/>
            <person name="Karch D."/>
            <person name="Rappold G.A."/>
        </authorList>
    </citation>
    <scope>NUCLEOTIDE SEQUENCE [MRNA] (ISOFORM 1)</scope>
    <scope>ALTERNATIVE SPLICING (ISOFORMS 2 AND 3)</scope>
    <scope>FUNCTION</scope>
    <scope>TISSUE SPECIFICITY</scope>
    <scope>CHROMOSOMAL TRANSLOCATION</scope>
</reference>
<reference key="3">
    <citation type="journal article" date="1997" name="DNA Res.">
        <title>Prediction of the coding sequences of unidentified human genes. VIII. 78 new cDNA clones from brain which code for large proteins in vitro.</title>
        <authorList>
            <person name="Ishikawa K."/>
            <person name="Nagase T."/>
            <person name="Nakajima D."/>
            <person name="Seki N."/>
            <person name="Ohira M."/>
            <person name="Miyajima N."/>
            <person name="Tanaka A."/>
            <person name="Kotani H."/>
            <person name="Nomura N."/>
            <person name="Ohara O."/>
        </authorList>
    </citation>
    <scope>NUCLEOTIDE SEQUENCE [LARGE SCALE MRNA] OF 15-1099 (ISOFORM 2)</scope>
    <source>
        <tissue>Brain</tissue>
    </source>
</reference>
<reference key="4">
    <citation type="journal article" date="2002" name="DNA Res.">
        <title>Construction of expression-ready cDNA clones for KIAA genes: manual curation of 330 KIAA cDNA clones.</title>
        <authorList>
            <person name="Nakajima D."/>
            <person name="Okazaki N."/>
            <person name="Yamakawa H."/>
            <person name="Kikuno R."/>
            <person name="Ohara O."/>
            <person name="Nagase T."/>
        </authorList>
    </citation>
    <scope>SEQUENCE REVISION</scope>
</reference>
<reference key="5">
    <citation type="journal article" date="2001" name="Cell">
        <title>Signal transduction in neuronal migration: roles of GTPase activating proteins and the small GTPase Cdc42 in the Slit-Robo pathway.</title>
        <authorList>
            <person name="Wong K."/>
            <person name="Ren X.R."/>
            <person name="Huang Y.Z."/>
            <person name="Xie Y."/>
            <person name="Liu G."/>
            <person name="Saito H."/>
            <person name="Tang H."/>
            <person name="Wen L."/>
            <person name="Brady-Kalnay S.M."/>
            <person name="Mei L."/>
            <person name="Wu J.Y."/>
            <person name="Xiong W.C."/>
            <person name="Rao Y."/>
        </authorList>
    </citation>
    <scope>INTERACTION WITH ROBO1</scope>
</reference>
<reference key="6">
    <citation type="journal article" date="2008" name="J. Proteome Res.">
        <title>Phosphoproteome of resting human platelets.</title>
        <authorList>
            <person name="Zahedi R.P."/>
            <person name="Lewandrowski U."/>
            <person name="Wiesner J."/>
            <person name="Wortelkamp S."/>
            <person name="Moebius J."/>
            <person name="Schuetz C."/>
            <person name="Walter U."/>
            <person name="Gambaryan S."/>
            <person name="Sickmann A."/>
        </authorList>
    </citation>
    <scope>IDENTIFICATION BY MASS SPECTROMETRY [LARGE SCALE ANALYSIS]</scope>
    <source>
        <tissue>Platelet</tissue>
    </source>
</reference>
<reference key="7">
    <citation type="journal article" date="2008" name="Proc. Natl. Acad. Sci. U.S.A.">
        <title>A quantitative atlas of mitotic phosphorylation.</title>
        <authorList>
            <person name="Dephoure N."/>
            <person name="Zhou C."/>
            <person name="Villen J."/>
            <person name="Beausoleil S.A."/>
            <person name="Bakalarski C.E."/>
            <person name="Elledge S.J."/>
            <person name="Gygi S.P."/>
        </authorList>
    </citation>
    <scope>PHOSPHORYLATION [LARGE SCALE ANALYSIS] AT SER-837</scope>
    <scope>IDENTIFICATION BY MASS SPECTROMETRY [LARGE SCALE ANALYSIS]</scope>
    <source>
        <tissue>Cervix carcinoma</tissue>
    </source>
</reference>
<reference key="8">
    <citation type="journal article" date="2009" name="BMC Immunol.">
        <title>Identification of SH3 domain interaction partners of human FasL (CD178) by phage display screening.</title>
        <authorList>
            <person name="Voss M."/>
            <person name="Lettau M."/>
            <person name="Janssen O."/>
        </authorList>
    </citation>
    <scope>INTERACTION WITH FASLG</scope>
</reference>
<reference key="9">
    <citation type="journal article" date="2006" name="Science">
        <title>The consensus coding sequences of human breast and colorectal cancers.</title>
        <authorList>
            <person name="Sjoeblom T."/>
            <person name="Jones S."/>
            <person name="Wood L.D."/>
            <person name="Parsons D.W."/>
            <person name="Lin J."/>
            <person name="Barber T.D."/>
            <person name="Mandelker D."/>
            <person name="Leary R.J."/>
            <person name="Ptak J."/>
            <person name="Silliman N."/>
            <person name="Szabo S."/>
            <person name="Buckhaults P."/>
            <person name="Farrell C."/>
            <person name="Meeh P."/>
            <person name="Markowitz S.D."/>
            <person name="Willis J."/>
            <person name="Dawson D."/>
            <person name="Willson J.K.V."/>
            <person name="Gazdar A.F."/>
            <person name="Hartigan J."/>
            <person name="Wu L."/>
            <person name="Liu C."/>
            <person name="Parmigiani G."/>
            <person name="Park B.H."/>
            <person name="Bachman K.E."/>
            <person name="Papadopoulos N."/>
            <person name="Vogelstein B."/>
            <person name="Kinzler K.W."/>
            <person name="Velculescu V.E."/>
        </authorList>
    </citation>
    <scope>VARIANT [LARGE SCALE ANALYSIS] ILE-623</scope>
</reference>
<organism>
    <name type="scientific">Homo sapiens</name>
    <name type="common">Human</name>
    <dbReference type="NCBI Taxonomy" id="9606"/>
    <lineage>
        <taxon>Eukaryota</taxon>
        <taxon>Metazoa</taxon>
        <taxon>Chordata</taxon>
        <taxon>Craniata</taxon>
        <taxon>Vertebrata</taxon>
        <taxon>Euteleostomi</taxon>
        <taxon>Mammalia</taxon>
        <taxon>Eutheria</taxon>
        <taxon>Euarchontoglires</taxon>
        <taxon>Primates</taxon>
        <taxon>Haplorrhini</taxon>
        <taxon>Catarrhini</taxon>
        <taxon>Hominidae</taxon>
        <taxon>Homo</taxon>
    </lineage>
</organism>
<comment type="function">
    <text evidence="8 9">GTPase-activating protein for RAC1 and perhaps Cdc42, but not for RhoA small GTPase. May attenuate RAC1 signaling in neurons.</text>
</comment>
<comment type="subunit">
    <text evidence="7 9 11 14">Homodimer (Probable). Forms a heterooligomer with SRGAP1 and SRGAP2 through its F-BAR domain. Interacts with WASF1. Probably interacts with ROBO1. Interacts with FASLG.</text>
</comment>
<comment type="interaction">
    <interactant intactId="EBI-368166">
        <id>O43295</id>
    </interactant>
    <interactant intactId="EBI-401755">
        <id>P62993</id>
        <label>GRB2</label>
    </interactant>
    <organismsDiffer>false</organismsDiffer>
    <experiments>2</experiments>
</comment>
<comment type="interaction">
    <interactant intactId="EBI-368166">
        <id>O43295</id>
    </interactant>
    <interactant intactId="EBI-466029">
        <id>P42858</id>
        <label>HTT</label>
    </interactant>
    <organismsDiffer>false</organismsDiffer>
    <experiments>4</experiments>
</comment>
<comment type="interaction">
    <interactant intactId="EBI-368166">
        <id>O43295</id>
    </interactant>
    <interactant intactId="EBI-80080">
        <id>O08838</id>
        <label>Amph</label>
    </interactant>
    <organismsDiffer>true</organismsDiffer>
    <experiments>3</experiments>
</comment>
<comment type="interaction">
    <interactant intactId="EBI-368166">
        <id>O43295</id>
    </interactant>
    <interactant intactId="EBI-1149235">
        <id>O35964</id>
        <label>Sh3gl1</label>
    </interactant>
    <organismsDiffer>true</organismsDiffer>
    <experiments>3</experiments>
</comment>
<comment type="interaction">
    <interactant intactId="EBI-368166">
        <id>O43295</id>
    </interactant>
    <interactant intactId="EBI-1149197">
        <id>O35179</id>
        <label>Sh3gl2</label>
    </interactant>
    <organismsDiffer>true</organismsDiffer>
    <experiments>3</experiments>
</comment>
<comment type="alternative products">
    <event type="alternative splicing"/>
    <isoform>
        <id>O43295-1</id>
        <name>1</name>
        <name>MEGAPa</name>
        <name>srGAP3a</name>
        <sequence type="displayed"/>
    </isoform>
    <isoform>
        <id>O43295-2</id>
        <name>2</name>
        <name>MEGAPb</name>
        <name>srGAP3b</name>
        <sequence type="described" ref="VSP_010581"/>
    </isoform>
    <isoform>
        <id>O43295-3</id>
        <name>3</name>
        <name>MEGAPc</name>
        <name>srGAP3c</name>
        <sequence type="described" ref="VSP_010582 VSP_010583"/>
    </isoform>
</comment>
<comment type="tissue specificity">
    <text evidence="8 9">Highly expressed in adult and fetal brain. Expressed at low levels in kidney. Isoform 3 is expressed in the kidney but is absent in the brain.</text>
</comment>
<comment type="domain">
    <text>The F-BAR domain mediates oligomerization, binds membranes, and induces plasma membrane protrusions.</text>
</comment>
<comment type="disease">
    <text evidence="8">A chromosomal aberration involving SRGAP3 is found in a patient with severe idiopathic intellectual disability (PubMed:12195014). Translocation t(X;3)(p11.2;p25) (PubMed:12195014).</text>
</comment>
<proteinExistence type="evidence at protein level"/>
<sequence length="1099" mass="124504">MSSQTKFKKDKEIIAEYEAQIKEIRTQLVEQFKCLEQQSESRLQLLQDLQEFFRRKAEIELEYSRSLEKLAERFSSKIRSSREHQFKKDQYLLSPVNCWYLVLHQTRRESRDHATLNDIFMNNVIVRLSQISEDVIRLFKKSKEIGLQMHEELLKVTNELYTVMKTYHMYHAESISAESKLKEAEKQEEKQFNKSGDLSMNLLRHEDRPQRRSSVKKIEKMKEKRQAKYSENKLKCTKARNDYLLNLAATNAAISKYYIHDVSDLIDCCDLGFHASLARTFRTYLSAEYNLETSRHEGLDVIENAVDNLDSRSDKHTVMDMCNQVFCPPLKFEFQPHMGDEVCQVSAQQPVQTELLMRYHQLQSRLATLKIENEEVRKTLDATMQTLQDMLTVEDFDVSDAFQHSRSTESVKSAASETYMSKINIAKRRANQQETEMFYFTKFKEYVNGSNLITKLQAKHDLLKQTLGEGERAECGTTRPPCLPPKPQKMRRPRPLSVYSHKLFNGSMEAFIKDSGQAIPLVVESCIRYINLYGLQQQGIFRVPGSQVEVNDIKNSFERGEDPLVDDQNERDINSVAGVLKLYFRGLENPLFPKERFQDLISTIKLENPAERVHQIQQILVTLPRVVIVVMRYLFAFLNHLSQYSDENMMDPYNLAICFGPTLMHIPDGQDPVSCQAHINEVIKTIIIHHEAIFPSPRELEGPVYEKCMAGGEEYCDSPHSEPGAIDEVDHDNGTEPHTSDEEVEQIEAIAKFDYMGRSPRELSFKKGASLLLYHRASEDWWEGRHNGVDGLIPHQYIVVQDMDDAFSDSLSQKADSEASSGPLLDDKASSKNDLQSPTEHISDYGFGGVMGRVRLRSDGAAIPRRRSGGDTHSPPRGLGPSIDTPPRAAACPSSPHKIPLTRGRIESPEKRRMATFGSAGSINYPDKKALSEGHSMRSTCGSTRHSSLGDHKSLEAEALAEDIEKTMSTALHELRELERQNTVKQAPDVVLDTLEPLKNPPGPVSSEPASPLHTIVIRDPDAAMRRSSSSSTEMMTTFKPALSARLAGAQLRPPPMRPVRPVVQHRSSSSSSSGVGSPAVTPTEKMFPNSSADKSGTM</sequence>
<protein>
    <recommendedName>
        <fullName>SLIT-ROBO Rho GTPase-activating protein 3</fullName>
        <shortName>srGAP3</shortName>
    </recommendedName>
    <alternativeName>
        <fullName>Mental disorder-associated GAP</fullName>
    </alternativeName>
    <alternativeName>
        <fullName>Rho GTPase-activating protein 14</fullName>
    </alternativeName>
    <alternativeName>
        <fullName>WAVE-associated Rac GTPase-activating protein</fullName>
        <shortName>WRP</shortName>
    </alternativeName>
</protein>